<organism>
    <name type="scientific">Aspergillus oryzae (strain ATCC 42149 / RIB 40)</name>
    <name type="common">Yellow koji mold</name>
    <dbReference type="NCBI Taxonomy" id="510516"/>
    <lineage>
        <taxon>Eukaryota</taxon>
        <taxon>Fungi</taxon>
        <taxon>Dikarya</taxon>
        <taxon>Ascomycota</taxon>
        <taxon>Pezizomycotina</taxon>
        <taxon>Eurotiomycetes</taxon>
        <taxon>Eurotiomycetidae</taxon>
        <taxon>Eurotiales</taxon>
        <taxon>Aspergillaceae</taxon>
        <taxon>Aspergillus</taxon>
        <taxon>Aspergillus subgen. Circumdati</taxon>
    </lineage>
</organism>
<feature type="signal peptide" evidence="2">
    <location>
        <begin position="1"/>
        <end position="19"/>
    </location>
</feature>
<feature type="chain" id="PRO_0000394353" description="Pectin lyase 2">
    <location>
        <begin position="20"/>
        <end position="375"/>
    </location>
</feature>
<feature type="active site" evidence="2">
    <location>
        <position position="255"/>
    </location>
</feature>
<feature type="glycosylation site" description="N-linked (GlcNAc...) asparagine" evidence="5">
    <location>
        <position position="128"/>
    </location>
</feature>
<feature type="disulfide bond" evidence="1">
    <location>
        <begin position="82"/>
        <end position="101"/>
    </location>
</feature>
<feature type="disulfide bond" evidence="1">
    <location>
        <begin position="91"/>
        <end position="225"/>
    </location>
</feature>
<feature type="disulfide bond" evidence="1">
    <location>
        <begin position="321"/>
        <end position="329"/>
    </location>
</feature>
<feature type="sequence conflict" description="In Ref. 1; BAB82468." evidence="4" ref="1">
    <original>G</original>
    <variation>A</variation>
    <location>
        <position position="28"/>
    </location>
</feature>
<feature type="sequence conflict" description="In Ref. 1; BAB82468." evidence="4" ref="1">
    <original>S</original>
    <variation>R</variation>
    <location>
        <position position="316"/>
    </location>
</feature>
<name>PELD_ASPOR</name>
<reference key="1">
    <citation type="journal article" date="2001" name="J. Biosci. Bioeng.">
        <title>A second pectin lyase gene (pel2) from Aspergillus oryzae KBN616: its sequence analysis and overexpression, and characterization of the gene products.</title>
        <authorList>
            <person name="Kitamoto N."/>
            <person name="Yoshino-Yasuda S."/>
            <person name="Ohmiya K."/>
            <person name="Tsukagoshi N."/>
        </authorList>
    </citation>
    <scope>NUCLEOTIDE SEQUENCE [GENOMIC DNA]</scope>
    <scope>GLYCOSYLATION</scope>
    <scope>FUNCTION</scope>
    <scope>BIOPHYSICOCHEMICAL PROPERTIES</scope>
    <source>
        <strain>KBN616</strain>
    </source>
</reference>
<reference key="2">
    <citation type="journal article" date="2005" name="Nature">
        <title>Genome sequencing and analysis of Aspergillus oryzae.</title>
        <authorList>
            <person name="Machida M."/>
            <person name="Asai K."/>
            <person name="Sano M."/>
            <person name="Tanaka T."/>
            <person name="Kumagai T."/>
            <person name="Terai G."/>
            <person name="Kusumoto K."/>
            <person name="Arima T."/>
            <person name="Akita O."/>
            <person name="Kashiwagi Y."/>
            <person name="Abe K."/>
            <person name="Gomi K."/>
            <person name="Horiuchi H."/>
            <person name="Kitamoto K."/>
            <person name="Kobayashi T."/>
            <person name="Takeuchi M."/>
            <person name="Denning D.W."/>
            <person name="Galagan J.E."/>
            <person name="Nierman W.C."/>
            <person name="Yu J."/>
            <person name="Archer D.B."/>
            <person name="Bennett J.W."/>
            <person name="Bhatnagar D."/>
            <person name="Cleveland T.E."/>
            <person name="Fedorova N.D."/>
            <person name="Gotoh O."/>
            <person name="Horikawa H."/>
            <person name="Hosoyama A."/>
            <person name="Ichinomiya M."/>
            <person name="Igarashi R."/>
            <person name="Iwashita K."/>
            <person name="Juvvadi P.R."/>
            <person name="Kato M."/>
            <person name="Kato Y."/>
            <person name="Kin T."/>
            <person name="Kokubun A."/>
            <person name="Maeda H."/>
            <person name="Maeyama N."/>
            <person name="Maruyama J."/>
            <person name="Nagasaki H."/>
            <person name="Nakajima T."/>
            <person name="Oda K."/>
            <person name="Okada K."/>
            <person name="Paulsen I."/>
            <person name="Sakamoto K."/>
            <person name="Sawano T."/>
            <person name="Takahashi M."/>
            <person name="Takase K."/>
            <person name="Terabayashi Y."/>
            <person name="Wortman J.R."/>
            <person name="Yamada O."/>
            <person name="Yamagata Y."/>
            <person name="Anazawa H."/>
            <person name="Hata Y."/>
            <person name="Koide Y."/>
            <person name="Komori T."/>
            <person name="Koyama Y."/>
            <person name="Minetoki T."/>
            <person name="Suharnan S."/>
            <person name="Tanaka A."/>
            <person name="Isono K."/>
            <person name="Kuhara S."/>
            <person name="Ogasawara N."/>
            <person name="Kikuchi H."/>
        </authorList>
    </citation>
    <scope>NUCLEOTIDE SEQUENCE [LARGE SCALE GENOMIC DNA]</scope>
    <source>
        <strain>ATCC 42149 / RIB 40</strain>
    </source>
</reference>
<sequence length="375" mass="39230">MKYAAVLTTVAALASRALGAGVSGTAEGFASSATGGGSATAVYPTTTDELVSYLGDDEARVIVLSQTFDFTNTEGTTTETGCAPWGTGSACQVAINKDDWCTNYESSAPSTSVTYDNAGSLGITVNSNKSLIGEGTKGVIKGKGLRIVNGVENVIIQNIAVTDINPKYVWGGDAITINQADLVWIDHVTTARIGRQHYVLGTEADNRVTLSNNYIDGESDYSATCDGHHYWNVYLDGSSDKVTMKGNYFYKTSGRAPKVQGNTYLHAVNNYWNDNSNHAFEIGSGGYVLAEGNTFADVTAAVEDSSFEGELFSSSSDADTCSSYIGRACKANSFTNSGDLSGTTVDVLSKFKGETVATADTASTAPASNAGQGNL</sequence>
<proteinExistence type="evidence at protein level"/>
<protein>
    <recommendedName>
        <fullName>Pectin lyase 2</fullName>
        <shortName>PL2</shortName>
        <ecNumber>4.2.2.10</ecNumber>
    </recommendedName>
    <alternativeName>
        <fullName>Pectin lyase D</fullName>
        <shortName>PLD</shortName>
    </alternativeName>
</protein>
<accession>Q2TXS4</accession>
<accession>Q8X1X1</accession>
<keyword id="KW-0119">Carbohydrate metabolism</keyword>
<keyword id="KW-0961">Cell wall biogenesis/degradation</keyword>
<keyword id="KW-1015">Disulfide bond</keyword>
<keyword id="KW-0325">Glycoprotein</keyword>
<keyword id="KW-0456">Lyase</keyword>
<keyword id="KW-0624">Polysaccharide degradation</keyword>
<keyword id="KW-1185">Reference proteome</keyword>
<keyword id="KW-0964">Secreted</keyword>
<keyword id="KW-0732">Signal</keyword>
<gene>
    <name type="primary">pel2</name>
    <name type="synonym">pelD</name>
    <name type="ORF">AO090010000030</name>
</gene>
<comment type="function">
    <text evidence="3">Pectinolytic enzymes consist of four classes of enzymes: pectin lyase, polygalacturonase, pectin methylesterase and rhamnogalacturonase. Among pectinolytic enzymes, pectin lyase is the most important in depolymerization of pectin, since it cleaves internal glycosidic bonds of highly methylated pectins.</text>
</comment>
<comment type="catalytic activity">
    <reaction>
        <text>Eliminative cleavage of (1-&gt;4)-alpha-D-galacturonan methyl ester to give oligosaccharides with 4-deoxy-6-O-methyl-alpha-D-galact-4-enuronosyl groups at their non-reducing ends.</text>
        <dbReference type="EC" id="4.2.2.10"/>
    </reaction>
</comment>
<comment type="biophysicochemical properties">
    <phDependence>
        <text evidence="3">Optimum pH is 6.0. Stable over a wide pH range of 3.0 to 7.0.</text>
    </phDependence>
    <temperatureDependence>
        <text evidence="3">Optimum temperature is 50 degrees Celsius. Stable up to 55 degrees Celsius but inactivated rapidly above 55 degrees Celsius.</text>
    </temperatureDependence>
</comment>
<comment type="subcellular location">
    <subcellularLocation>
        <location evidence="4">Secreted</location>
    </subcellularLocation>
</comment>
<comment type="similarity">
    <text evidence="4">Belongs to the polysaccharide lyase 1 family.</text>
</comment>
<dbReference type="EC" id="4.2.2.10"/>
<dbReference type="EMBL" id="AB029323">
    <property type="protein sequence ID" value="BAB82468.1"/>
    <property type="molecule type" value="Genomic_DNA"/>
</dbReference>
<dbReference type="EMBL" id="BA000056">
    <property type="protein sequence ID" value="BAE65949.1"/>
    <property type="molecule type" value="Genomic_DNA"/>
</dbReference>
<dbReference type="RefSeq" id="XP_001827082.1">
    <property type="nucleotide sequence ID" value="XM_001827030.1"/>
</dbReference>
<dbReference type="SMR" id="Q2TXS4"/>
<dbReference type="STRING" id="510516.Q2TXS4"/>
<dbReference type="CAZy" id="PL1">
    <property type="family name" value="Polysaccharide Lyase Family 1"/>
</dbReference>
<dbReference type="GlyCosmos" id="Q2TXS4">
    <property type="glycosylation" value="1 site, No reported glycans"/>
</dbReference>
<dbReference type="iPTMnet" id="Q2TXS4"/>
<dbReference type="EnsemblFungi" id="BAE65949">
    <property type="protein sequence ID" value="BAE65949"/>
    <property type="gene ID" value="AO090010000030"/>
</dbReference>
<dbReference type="GeneID" id="5999216"/>
<dbReference type="KEGG" id="aor:AO090010000030"/>
<dbReference type="VEuPathDB" id="FungiDB:AO090010000030"/>
<dbReference type="HOGENOM" id="CLU_021980_0_1_1"/>
<dbReference type="OMA" id="NIGRQHI"/>
<dbReference type="OrthoDB" id="88760at5052"/>
<dbReference type="Proteomes" id="UP000006564">
    <property type="component" value="Chromosome 8"/>
</dbReference>
<dbReference type="GO" id="GO:0005576">
    <property type="term" value="C:extracellular region"/>
    <property type="evidence" value="ECO:0000314"/>
    <property type="project" value="AspGD"/>
</dbReference>
<dbReference type="GO" id="GO:0030570">
    <property type="term" value="F:pectate lyase activity"/>
    <property type="evidence" value="ECO:0007669"/>
    <property type="project" value="InterPro"/>
</dbReference>
<dbReference type="GO" id="GO:0047490">
    <property type="term" value="F:pectin lyase activity"/>
    <property type="evidence" value="ECO:0000314"/>
    <property type="project" value="UniProtKB"/>
</dbReference>
<dbReference type="GO" id="GO:0071555">
    <property type="term" value="P:cell wall organization"/>
    <property type="evidence" value="ECO:0007669"/>
    <property type="project" value="UniProtKB-KW"/>
</dbReference>
<dbReference type="GO" id="GO:0045490">
    <property type="term" value="P:pectin catabolic process"/>
    <property type="evidence" value="ECO:0000314"/>
    <property type="project" value="UniProtKB"/>
</dbReference>
<dbReference type="FunFam" id="2.160.20.10:FF:000003">
    <property type="entry name" value="Pectin lyase F"/>
    <property type="match status" value="1"/>
</dbReference>
<dbReference type="Gene3D" id="2.160.20.10">
    <property type="entry name" value="Single-stranded right-handed beta-helix, Pectin lyase-like"/>
    <property type="match status" value="1"/>
</dbReference>
<dbReference type="InterPro" id="IPR002022">
    <property type="entry name" value="Pec_lyase"/>
</dbReference>
<dbReference type="InterPro" id="IPR012334">
    <property type="entry name" value="Pectin_lyas_fold"/>
</dbReference>
<dbReference type="InterPro" id="IPR011050">
    <property type="entry name" value="Pectin_lyase_fold/virulence"/>
</dbReference>
<dbReference type="InterPro" id="IPR045032">
    <property type="entry name" value="PEL"/>
</dbReference>
<dbReference type="PANTHER" id="PTHR31683">
    <property type="entry name" value="PECTATE LYASE 18-RELATED"/>
    <property type="match status" value="1"/>
</dbReference>
<dbReference type="PANTHER" id="PTHR31683:SF16">
    <property type="entry name" value="PECTIN LYASE A-RELATED"/>
    <property type="match status" value="1"/>
</dbReference>
<dbReference type="Pfam" id="PF00544">
    <property type="entry name" value="Pectate_lyase_4"/>
    <property type="match status" value="1"/>
</dbReference>
<dbReference type="SMART" id="SM00656">
    <property type="entry name" value="Amb_all"/>
    <property type="match status" value="1"/>
</dbReference>
<dbReference type="SUPFAM" id="SSF51126">
    <property type="entry name" value="Pectin lyase-like"/>
    <property type="match status" value="1"/>
</dbReference>
<evidence type="ECO:0000250" key="1"/>
<evidence type="ECO:0000255" key="2"/>
<evidence type="ECO:0000269" key="3">
    <source>
    </source>
</evidence>
<evidence type="ECO:0000305" key="4"/>
<evidence type="ECO:0000305" key="5">
    <source>
    </source>
</evidence>